<accession>B2VE05</accession>
<protein>
    <recommendedName>
        <fullName evidence="1">Small ribosomal subunit protein uS2</fullName>
    </recommendedName>
    <alternativeName>
        <fullName evidence="2">30S ribosomal protein S2</fullName>
    </alternativeName>
</protein>
<organism>
    <name type="scientific">Erwinia tasmaniensis (strain DSM 17950 / CFBP 7177 / CIP 109463 / NCPPB 4357 / Et1/99)</name>
    <dbReference type="NCBI Taxonomy" id="465817"/>
    <lineage>
        <taxon>Bacteria</taxon>
        <taxon>Pseudomonadati</taxon>
        <taxon>Pseudomonadota</taxon>
        <taxon>Gammaproteobacteria</taxon>
        <taxon>Enterobacterales</taxon>
        <taxon>Erwiniaceae</taxon>
        <taxon>Erwinia</taxon>
    </lineage>
</organism>
<gene>
    <name evidence="1" type="primary">rpsB</name>
    <name type="ordered locus">ETA_08890</name>
</gene>
<evidence type="ECO:0000255" key="1">
    <source>
        <dbReference type="HAMAP-Rule" id="MF_00291"/>
    </source>
</evidence>
<evidence type="ECO:0000305" key="2"/>
<proteinExistence type="inferred from homology"/>
<reference key="1">
    <citation type="journal article" date="2008" name="Environ. Microbiol.">
        <title>The genome of Erwinia tasmaniensis strain Et1/99, a non-pathogenic bacterium in the genus Erwinia.</title>
        <authorList>
            <person name="Kube M."/>
            <person name="Migdoll A.M."/>
            <person name="Mueller I."/>
            <person name="Kuhl H."/>
            <person name="Beck A."/>
            <person name="Reinhardt R."/>
            <person name="Geider K."/>
        </authorList>
    </citation>
    <scope>NUCLEOTIDE SEQUENCE [LARGE SCALE GENOMIC DNA]</scope>
    <source>
        <strain>DSM 17950 / CFBP 7177 / CIP 109463 / NCPPB 4357 / Et1/99</strain>
    </source>
</reference>
<keyword id="KW-1185">Reference proteome</keyword>
<keyword id="KW-0687">Ribonucleoprotein</keyword>
<keyword id="KW-0689">Ribosomal protein</keyword>
<feature type="chain" id="PRO_1000115020" description="Small ribosomal subunit protein uS2">
    <location>
        <begin position="1"/>
        <end position="241"/>
    </location>
</feature>
<comment type="similarity">
    <text evidence="1">Belongs to the universal ribosomal protein uS2 family.</text>
</comment>
<dbReference type="EMBL" id="CU468135">
    <property type="protein sequence ID" value="CAO95935.1"/>
    <property type="molecule type" value="Genomic_DNA"/>
</dbReference>
<dbReference type="RefSeq" id="WP_012440637.1">
    <property type="nucleotide sequence ID" value="NC_010694.1"/>
</dbReference>
<dbReference type="SMR" id="B2VE05"/>
<dbReference type="STRING" id="465817.ETA_08890"/>
<dbReference type="KEGG" id="eta:ETA_08890"/>
<dbReference type="eggNOG" id="COG0052">
    <property type="taxonomic scope" value="Bacteria"/>
</dbReference>
<dbReference type="HOGENOM" id="CLU_040318_1_2_6"/>
<dbReference type="OrthoDB" id="9808036at2"/>
<dbReference type="Proteomes" id="UP000001726">
    <property type="component" value="Chromosome"/>
</dbReference>
<dbReference type="GO" id="GO:0022627">
    <property type="term" value="C:cytosolic small ribosomal subunit"/>
    <property type="evidence" value="ECO:0007669"/>
    <property type="project" value="TreeGrafter"/>
</dbReference>
<dbReference type="GO" id="GO:0003735">
    <property type="term" value="F:structural constituent of ribosome"/>
    <property type="evidence" value="ECO:0007669"/>
    <property type="project" value="InterPro"/>
</dbReference>
<dbReference type="GO" id="GO:0006412">
    <property type="term" value="P:translation"/>
    <property type="evidence" value="ECO:0007669"/>
    <property type="project" value="UniProtKB-UniRule"/>
</dbReference>
<dbReference type="CDD" id="cd01425">
    <property type="entry name" value="RPS2"/>
    <property type="match status" value="1"/>
</dbReference>
<dbReference type="FunFam" id="1.10.287.610:FF:000001">
    <property type="entry name" value="30S ribosomal protein S2"/>
    <property type="match status" value="1"/>
</dbReference>
<dbReference type="Gene3D" id="3.40.50.10490">
    <property type="entry name" value="Glucose-6-phosphate isomerase like protein, domain 1"/>
    <property type="match status" value="1"/>
</dbReference>
<dbReference type="Gene3D" id="1.10.287.610">
    <property type="entry name" value="Helix hairpin bin"/>
    <property type="match status" value="1"/>
</dbReference>
<dbReference type="HAMAP" id="MF_00291_B">
    <property type="entry name" value="Ribosomal_uS2_B"/>
    <property type="match status" value="1"/>
</dbReference>
<dbReference type="InterPro" id="IPR001865">
    <property type="entry name" value="Ribosomal_uS2"/>
</dbReference>
<dbReference type="InterPro" id="IPR005706">
    <property type="entry name" value="Ribosomal_uS2_bac/mit/plastid"/>
</dbReference>
<dbReference type="InterPro" id="IPR018130">
    <property type="entry name" value="Ribosomal_uS2_CS"/>
</dbReference>
<dbReference type="InterPro" id="IPR023591">
    <property type="entry name" value="Ribosomal_uS2_flav_dom_sf"/>
</dbReference>
<dbReference type="NCBIfam" id="TIGR01011">
    <property type="entry name" value="rpsB_bact"/>
    <property type="match status" value="1"/>
</dbReference>
<dbReference type="PANTHER" id="PTHR12534">
    <property type="entry name" value="30S RIBOSOMAL PROTEIN S2 PROKARYOTIC AND ORGANELLAR"/>
    <property type="match status" value="1"/>
</dbReference>
<dbReference type="PANTHER" id="PTHR12534:SF0">
    <property type="entry name" value="SMALL RIBOSOMAL SUBUNIT PROTEIN US2M"/>
    <property type="match status" value="1"/>
</dbReference>
<dbReference type="Pfam" id="PF00318">
    <property type="entry name" value="Ribosomal_S2"/>
    <property type="match status" value="1"/>
</dbReference>
<dbReference type="PRINTS" id="PR00395">
    <property type="entry name" value="RIBOSOMALS2"/>
</dbReference>
<dbReference type="SUPFAM" id="SSF52313">
    <property type="entry name" value="Ribosomal protein S2"/>
    <property type="match status" value="1"/>
</dbReference>
<dbReference type="PROSITE" id="PS00962">
    <property type="entry name" value="RIBOSOMAL_S2_1"/>
    <property type="match status" value="1"/>
</dbReference>
<dbReference type="PROSITE" id="PS00963">
    <property type="entry name" value="RIBOSOMAL_S2_2"/>
    <property type="match status" value="1"/>
</dbReference>
<name>RS2_ERWT9</name>
<sequence>MATVSMRDMLQAGVHFGHQTRYWNPKMKPFIFGARNKVHIINLEKTVPMFNEALAELSKISSRKGKILFVGTKRAASEAVKEHALSCDQFFVNHRWLGGMLTNWKTVRQSIKRLKDLEIQSQDGTFDKLTKKEALMRTRELSKLENSLGGIKDMGGLPDALFVVDADHEHIAIKEANNLGIPVFSIVDTNSDPDGVDFIIPGNDDAIRAVSLYLTAVAATVREGRSQDLAQQAEETFAEAE</sequence>